<sequence>MEVLMAERANLVFHNKAIDGTAMKRLISRLIEHFGMAYTSHILDQVKTLGFQQATATSISLGIDDLLTIPSKGWLVQDAEQQSLILEKHHQYGNVHAVEKLRQSIEIWYATSEYLRQEMNPNFRMTDPFNPVHIMSFSGARGNASQVHQLVGMRGLMSDPQGQMIDLPIQSNLREGLSLTEYIISCYGARKGVVDTAVRTSDAGYLTRRLVEVVQHIVVRRTDCGTARGISVSPRNGIMPERIFSQTLIGRVLADDIYMGSRCIATRNQAIGIGLVNRFITFRAQPISIRTPFTCRSTSWICRLCYGRSPTHGDLVELGEAVGIIAGQSIGEPGTQLTLRTFHTGGVFTGGTAEHVRAPSNGKIKFNEDLVHPTRTRHGHPAFLCSIDLYVTIESEDILHNVNIPPKSLLLVQNDQYVESEQVIAEIRAGISTLNFKEKVRKHIYSDSDGEMHWSTDVYHAPEFTYGNVHLLPKTSHLWILLGGPCRSSLVYLSIHKDQDQMNAHSLSGKRRYTSNLSVTNDQARQKLFSSDFYGQKEDRIPDYSDLNRIICTGQYNLVYSPILHGNSALLSKRRRNKFIIPLHSIQELENELMPCSGISIEIPVNGIFRRNSILAYFDDPRYRRKSSGIIKYGTIETHSVIKKEDLIEYRGVKEFRPKYQMKVDRFFFIPEEVHILPGSSSLMVRNNSIVGVDTQITLNLRSRVGGLVRVERKKKRIELKIFSGDIHFPGETDKISRHTGVLIPPGTGKRNSKEYKKVQNWIYVQRITPSKKRFFVLVRPVVTYEITDGINLGTLFPPDPLQERDNVQLRIVNYILYGNGKPIRGISDTSIQLVRTCLVLNWNQDKKSSSCEEARASFVEIRTNGLIRHFLKINLVKSPISYIGKRNDPSGSGLLSDNGSDCTNINPFSAIYSYSKAKIQQSLNQPQGTIHTLLNRNKECQSLIILSAANCSRMEPFKDVKYHSVIKESIKKDPLIPIRNSLGPLGTCLPIENFYSSYHLITHNQILVTKYLQLDNLKQTFQVIKLKYYLMDENGKIFNPDPCRNIILNPFNLNWSFLHHYYCAETSKIISLGQFICENVCIAKNGPPLKSGQVILVQVDSIVIRSAKPYLATPGATVHGHYGETLYEGDTLVTFIYEKSRSGDITQGLPKVEQVLEVRSIDSISMNLEKRVEGWNKCIPRILGIPWGFLIGAELTIAQSRISLVNKIQQVYRSQGVQIHNRHIEIIVRQITSKVLISEDGMSNVFSPGELIGLLRAERMGRALEEAICYRVVLLGITRASLNTQSFISEASFQETARVLAKAALRGRIDWLKGLKENVVLGGVIPVGTGFKGLVHPSKQHNNIPLETKKTNLFEGEMRDILFHHRKLFDSCLSKKFHDIPEQSFIGFNDS</sequence>
<organism>
    <name type="scientific">Solanum lycopersicum</name>
    <name type="common">Tomato</name>
    <name type="synonym">Lycopersicon esculentum</name>
    <dbReference type="NCBI Taxonomy" id="4081"/>
    <lineage>
        <taxon>Eukaryota</taxon>
        <taxon>Viridiplantae</taxon>
        <taxon>Streptophyta</taxon>
        <taxon>Embryophyta</taxon>
        <taxon>Tracheophyta</taxon>
        <taxon>Spermatophyta</taxon>
        <taxon>Magnoliopsida</taxon>
        <taxon>eudicotyledons</taxon>
        <taxon>Gunneridae</taxon>
        <taxon>Pentapetalae</taxon>
        <taxon>asterids</taxon>
        <taxon>lamiids</taxon>
        <taxon>Solanales</taxon>
        <taxon>Solanaceae</taxon>
        <taxon>Solanoideae</taxon>
        <taxon>Solaneae</taxon>
        <taxon>Solanum</taxon>
        <taxon>Solanum subgen. Lycopersicon</taxon>
    </lineage>
</organism>
<dbReference type="EC" id="2.7.7.6" evidence="1"/>
<dbReference type="EMBL" id="DQ347959">
    <property type="protein sequence ID" value="ABC56290.1"/>
    <property type="molecule type" value="Genomic_DNA"/>
</dbReference>
<dbReference type="EMBL" id="AM087200">
    <property type="protein sequence ID" value="CAJ32383.1"/>
    <property type="molecule type" value="Genomic_DNA"/>
</dbReference>
<dbReference type="RefSeq" id="AP_004918.1">
    <property type="nucleotide sequence ID" value="AC_000188.1"/>
</dbReference>
<dbReference type="RefSeq" id="YP_008563078.1">
    <property type="nucleotide sequence ID" value="NC_007898.3"/>
</dbReference>
<dbReference type="SMR" id="Q2MIB0"/>
<dbReference type="FunCoup" id="Q2MIB0">
    <property type="interactions" value="60"/>
</dbReference>
<dbReference type="STRING" id="4081.Q2MIB0"/>
<dbReference type="PaxDb" id="4081-Solyc08g028910.1.1"/>
<dbReference type="GeneID" id="3950457"/>
<dbReference type="KEGG" id="sly:3950457"/>
<dbReference type="eggNOG" id="ENOG502QPYA">
    <property type="taxonomic scope" value="Eukaryota"/>
</dbReference>
<dbReference type="InParanoid" id="Q2MIB0"/>
<dbReference type="OrthoDB" id="498011at2759"/>
<dbReference type="Proteomes" id="UP000004994">
    <property type="component" value="Chloroplast"/>
</dbReference>
<dbReference type="ExpressionAtlas" id="Q2MIB0">
    <property type="expression patterns" value="differential"/>
</dbReference>
<dbReference type="GO" id="GO:0009507">
    <property type="term" value="C:chloroplast"/>
    <property type="evidence" value="ECO:0007669"/>
    <property type="project" value="UniProtKB-SubCell"/>
</dbReference>
<dbReference type="GO" id="GO:0000428">
    <property type="term" value="C:DNA-directed RNA polymerase complex"/>
    <property type="evidence" value="ECO:0007669"/>
    <property type="project" value="UniProtKB-KW"/>
</dbReference>
<dbReference type="GO" id="GO:0005739">
    <property type="term" value="C:mitochondrion"/>
    <property type="evidence" value="ECO:0007669"/>
    <property type="project" value="GOC"/>
</dbReference>
<dbReference type="GO" id="GO:0003677">
    <property type="term" value="F:DNA binding"/>
    <property type="evidence" value="ECO:0007669"/>
    <property type="project" value="UniProtKB-UniRule"/>
</dbReference>
<dbReference type="GO" id="GO:0003899">
    <property type="term" value="F:DNA-directed RNA polymerase activity"/>
    <property type="evidence" value="ECO:0007669"/>
    <property type="project" value="UniProtKB-UniRule"/>
</dbReference>
<dbReference type="GO" id="GO:0008270">
    <property type="term" value="F:zinc ion binding"/>
    <property type="evidence" value="ECO:0007669"/>
    <property type="project" value="UniProtKB-UniRule"/>
</dbReference>
<dbReference type="GO" id="GO:0006351">
    <property type="term" value="P:DNA-templated transcription"/>
    <property type="evidence" value="ECO:0007669"/>
    <property type="project" value="UniProtKB-UniRule"/>
</dbReference>
<dbReference type="CDD" id="cd02655">
    <property type="entry name" value="RNAP_beta'_C"/>
    <property type="match status" value="1"/>
</dbReference>
<dbReference type="FunFam" id="1.10.132.30:FF:000002">
    <property type="entry name" value="DNA-directed RNA polymerase subunit beta"/>
    <property type="match status" value="1"/>
</dbReference>
<dbReference type="FunFam" id="1.10.1790.20:FF:000002">
    <property type="entry name" value="DNA-directed RNA polymerase subunit beta"/>
    <property type="match status" value="1"/>
</dbReference>
<dbReference type="Gene3D" id="1.10.132.30">
    <property type="match status" value="1"/>
</dbReference>
<dbReference type="Gene3D" id="1.10.150.390">
    <property type="match status" value="1"/>
</dbReference>
<dbReference type="Gene3D" id="1.10.1790.20">
    <property type="match status" value="1"/>
</dbReference>
<dbReference type="Gene3D" id="1.10.274.100">
    <property type="entry name" value="RNA polymerase Rpb1, domain 3"/>
    <property type="match status" value="1"/>
</dbReference>
<dbReference type="HAMAP" id="MF_01324">
    <property type="entry name" value="RNApol_bact_RpoC2"/>
    <property type="match status" value="1"/>
</dbReference>
<dbReference type="InterPro" id="IPR012756">
    <property type="entry name" value="DNA-dir_RpoC2_beta_pp"/>
</dbReference>
<dbReference type="InterPro" id="IPR050254">
    <property type="entry name" value="RNA_pol_beta''_euk"/>
</dbReference>
<dbReference type="InterPro" id="IPR042102">
    <property type="entry name" value="RNA_pol_Rpb1_3_sf"/>
</dbReference>
<dbReference type="InterPro" id="IPR007083">
    <property type="entry name" value="RNA_pol_Rpb1_4"/>
</dbReference>
<dbReference type="InterPro" id="IPR007081">
    <property type="entry name" value="RNA_pol_Rpb1_5"/>
</dbReference>
<dbReference type="InterPro" id="IPR038120">
    <property type="entry name" value="Rpb1_funnel_sf"/>
</dbReference>
<dbReference type="NCBIfam" id="TIGR02388">
    <property type="entry name" value="rpoC2_cyan"/>
    <property type="match status" value="1"/>
</dbReference>
<dbReference type="PANTHER" id="PTHR34995">
    <property type="entry name" value="DNA-DIRECTED RNA POLYMERASE SUBUNIT BETA"/>
    <property type="match status" value="1"/>
</dbReference>
<dbReference type="PANTHER" id="PTHR34995:SF1">
    <property type="entry name" value="DNA-DIRECTED RNA POLYMERASE SUBUNIT BETA"/>
    <property type="match status" value="1"/>
</dbReference>
<dbReference type="Pfam" id="PF05000">
    <property type="entry name" value="RNA_pol_Rpb1_4"/>
    <property type="match status" value="1"/>
</dbReference>
<dbReference type="Pfam" id="PF04998">
    <property type="entry name" value="RNA_pol_Rpb1_5"/>
    <property type="match status" value="2"/>
</dbReference>
<dbReference type="SUPFAM" id="SSF64484">
    <property type="entry name" value="beta and beta-prime subunits of DNA dependent RNA-polymerase"/>
    <property type="match status" value="1"/>
</dbReference>
<gene>
    <name evidence="1" type="primary">rpoC2</name>
</gene>
<name>RPOC2_SOLLC</name>
<geneLocation type="chloroplast"/>
<comment type="function">
    <text evidence="1">DNA-dependent RNA polymerase catalyzes the transcription of DNA into RNA using the four ribonucleoside triphosphates as substrates.</text>
</comment>
<comment type="catalytic activity">
    <reaction evidence="1">
        <text>RNA(n) + a ribonucleoside 5'-triphosphate = RNA(n+1) + diphosphate</text>
        <dbReference type="Rhea" id="RHEA:21248"/>
        <dbReference type="Rhea" id="RHEA-COMP:14527"/>
        <dbReference type="Rhea" id="RHEA-COMP:17342"/>
        <dbReference type="ChEBI" id="CHEBI:33019"/>
        <dbReference type="ChEBI" id="CHEBI:61557"/>
        <dbReference type="ChEBI" id="CHEBI:140395"/>
        <dbReference type="EC" id="2.7.7.6"/>
    </reaction>
</comment>
<comment type="cofactor">
    <cofactor evidence="1">
        <name>Zn(2+)</name>
        <dbReference type="ChEBI" id="CHEBI:29105"/>
    </cofactor>
    <text evidence="1">Binds 1 Zn(2+) ion per subunit.</text>
</comment>
<comment type="subunit">
    <text evidence="1">In plastids the minimal PEP RNA polymerase catalytic core is composed of four subunits: alpha, beta, beta', and beta''. When a (nuclear-encoded) sigma factor is associated with the core the holoenzyme is formed, which can initiate transcription.</text>
</comment>
<comment type="subcellular location">
    <subcellularLocation>
        <location evidence="1">Plastid</location>
        <location evidence="1">Chloroplast</location>
    </subcellularLocation>
</comment>
<comment type="similarity">
    <text evidence="1">Belongs to the RNA polymerase beta' chain family. RpoC2 subfamily.</text>
</comment>
<evidence type="ECO:0000255" key="1">
    <source>
        <dbReference type="HAMAP-Rule" id="MF_01324"/>
    </source>
</evidence>
<reference key="1">
    <citation type="journal article" date="2006" name="Theor. Appl. Genet.">
        <title>Complete chloroplast genome sequences of Solanum bulbocastanum, Solanum lycopersicum and comparative analyses with other Solanaceae genomes.</title>
        <authorList>
            <person name="Daniell H."/>
            <person name="Lee S.-B."/>
            <person name="Grevich J."/>
            <person name="Saski C."/>
            <person name="Quesada-Vargas T."/>
            <person name="Guda C."/>
            <person name="Tomkins J."/>
            <person name="Jansen R.K."/>
        </authorList>
    </citation>
    <scope>NUCLEOTIDE SEQUENCE [LARGE SCALE GENOMIC DNA]</scope>
    <source>
        <strain>cv. LA3023</strain>
    </source>
</reference>
<reference key="2">
    <citation type="journal article" date="2006" name="J. Mol. Evol.">
        <title>Sequence of the tomato chloroplast DNA and evolutionary comparison of solanaceous plastid genomes.</title>
        <authorList>
            <person name="Kahlau S."/>
            <person name="Aspinall S."/>
            <person name="Gray J.C."/>
            <person name="Bock R."/>
        </authorList>
    </citation>
    <scope>NUCLEOTIDE SEQUENCE [LARGE SCALE GENOMIC DNA]</scope>
    <source>
        <strain>cv. IPA-6</strain>
    </source>
</reference>
<keyword id="KW-0150">Chloroplast</keyword>
<keyword id="KW-0240">DNA-directed RNA polymerase</keyword>
<keyword id="KW-0479">Metal-binding</keyword>
<keyword id="KW-0548">Nucleotidyltransferase</keyword>
<keyword id="KW-0934">Plastid</keyword>
<keyword id="KW-1185">Reference proteome</keyword>
<keyword id="KW-0804">Transcription</keyword>
<keyword id="KW-0808">Transferase</keyword>
<keyword id="KW-0862">Zinc</keyword>
<protein>
    <recommendedName>
        <fullName evidence="1">DNA-directed RNA polymerase subunit beta''</fullName>
        <ecNumber evidence="1">2.7.7.6</ecNumber>
    </recommendedName>
    <alternativeName>
        <fullName evidence="1">PEP</fullName>
    </alternativeName>
    <alternativeName>
        <fullName evidence="1">Plastid-encoded RNA polymerase subunit beta''</fullName>
        <shortName evidence="1">RNA polymerase subunit beta''</shortName>
    </alternativeName>
</protein>
<feature type="chain" id="PRO_0000277202" description="DNA-directed RNA polymerase subunit beta''">
    <location>
        <begin position="1"/>
        <end position="1392"/>
    </location>
</feature>
<feature type="binding site" evidence="1">
    <location>
        <position position="224"/>
    </location>
    <ligand>
        <name>Zn(2+)</name>
        <dbReference type="ChEBI" id="CHEBI:29105"/>
    </ligand>
</feature>
<feature type="binding site" evidence="1">
    <location>
        <position position="295"/>
    </location>
    <ligand>
        <name>Zn(2+)</name>
        <dbReference type="ChEBI" id="CHEBI:29105"/>
    </ligand>
</feature>
<feature type="binding site" evidence="1">
    <location>
        <position position="302"/>
    </location>
    <ligand>
        <name>Zn(2+)</name>
        <dbReference type="ChEBI" id="CHEBI:29105"/>
    </ligand>
</feature>
<feature type="binding site" evidence="1">
    <location>
        <position position="305"/>
    </location>
    <ligand>
        <name>Zn(2+)</name>
        <dbReference type="ChEBI" id="CHEBI:29105"/>
    </ligand>
</feature>
<proteinExistence type="inferred from homology"/>
<accession>Q2MIB0</accession>